<reference key="1">
    <citation type="journal article" date="1996" name="J. Biol. Chem.">
        <title>Type I phosphatidylinositol-4-phosphate 5-kinases are distinct members of this novel lipid kinase family.</title>
        <authorList>
            <person name="Loijens J.C."/>
            <person name="Anderson R.A."/>
        </authorList>
    </citation>
    <scope>NUCLEOTIDE SEQUENCE [MRNA] (ISOFORMS 1; 2 AND 3)</scope>
    <scope>FUNCTION</scope>
    <scope>CATALYTIC ACTIVITY</scope>
    <scope>TISSUE SPECIFICITY</scope>
    <source>
        <tissue>Fetal brain</tissue>
    </source>
</reference>
<reference key="2">
    <citation type="journal article" date="2004" name="Nat. Genet.">
        <title>Complete sequencing and characterization of 21,243 full-length human cDNAs.</title>
        <authorList>
            <person name="Ota T."/>
            <person name="Suzuki Y."/>
            <person name="Nishikawa T."/>
            <person name="Otsuki T."/>
            <person name="Sugiyama T."/>
            <person name="Irie R."/>
            <person name="Wakamatsu A."/>
            <person name="Hayashi K."/>
            <person name="Sato H."/>
            <person name="Nagai K."/>
            <person name="Kimura K."/>
            <person name="Makita H."/>
            <person name="Sekine M."/>
            <person name="Obayashi M."/>
            <person name="Nishi T."/>
            <person name="Shibahara T."/>
            <person name="Tanaka T."/>
            <person name="Ishii S."/>
            <person name="Yamamoto J."/>
            <person name="Saito K."/>
            <person name="Kawai Y."/>
            <person name="Isono Y."/>
            <person name="Nakamura Y."/>
            <person name="Nagahari K."/>
            <person name="Murakami K."/>
            <person name="Yasuda T."/>
            <person name="Iwayanagi T."/>
            <person name="Wagatsuma M."/>
            <person name="Shiratori A."/>
            <person name="Sudo H."/>
            <person name="Hosoiri T."/>
            <person name="Kaku Y."/>
            <person name="Kodaira H."/>
            <person name="Kondo H."/>
            <person name="Sugawara M."/>
            <person name="Takahashi M."/>
            <person name="Kanda K."/>
            <person name="Yokoi T."/>
            <person name="Furuya T."/>
            <person name="Kikkawa E."/>
            <person name="Omura Y."/>
            <person name="Abe K."/>
            <person name="Kamihara K."/>
            <person name="Katsuta N."/>
            <person name="Sato K."/>
            <person name="Tanikawa M."/>
            <person name="Yamazaki M."/>
            <person name="Ninomiya K."/>
            <person name="Ishibashi T."/>
            <person name="Yamashita H."/>
            <person name="Murakawa K."/>
            <person name="Fujimori K."/>
            <person name="Tanai H."/>
            <person name="Kimata M."/>
            <person name="Watanabe M."/>
            <person name="Hiraoka S."/>
            <person name="Chiba Y."/>
            <person name="Ishida S."/>
            <person name="Ono Y."/>
            <person name="Takiguchi S."/>
            <person name="Watanabe S."/>
            <person name="Yosida M."/>
            <person name="Hotuta T."/>
            <person name="Kusano J."/>
            <person name="Kanehori K."/>
            <person name="Takahashi-Fujii A."/>
            <person name="Hara H."/>
            <person name="Tanase T.-O."/>
            <person name="Nomura Y."/>
            <person name="Togiya S."/>
            <person name="Komai F."/>
            <person name="Hara R."/>
            <person name="Takeuchi K."/>
            <person name="Arita M."/>
            <person name="Imose N."/>
            <person name="Musashino K."/>
            <person name="Yuuki H."/>
            <person name="Oshima A."/>
            <person name="Sasaki N."/>
            <person name="Aotsuka S."/>
            <person name="Yoshikawa Y."/>
            <person name="Matsunawa H."/>
            <person name="Ichihara T."/>
            <person name="Shiohata N."/>
            <person name="Sano S."/>
            <person name="Moriya S."/>
            <person name="Momiyama H."/>
            <person name="Satoh N."/>
            <person name="Takami S."/>
            <person name="Terashima Y."/>
            <person name="Suzuki O."/>
            <person name="Nakagawa S."/>
            <person name="Senoh A."/>
            <person name="Mizoguchi H."/>
            <person name="Goto Y."/>
            <person name="Shimizu F."/>
            <person name="Wakebe H."/>
            <person name="Hishigaki H."/>
            <person name="Watanabe T."/>
            <person name="Sugiyama A."/>
            <person name="Takemoto M."/>
            <person name="Kawakami B."/>
            <person name="Yamazaki M."/>
            <person name="Watanabe K."/>
            <person name="Kumagai A."/>
            <person name="Itakura S."/>
            <person name="Fukuzumi Y."/>
            <person name="Fujimori Y."/>
            <person name="Komiyama M."/>
            <person name="Tashiro H."/>
            <person name="Tanigami A."/>
            <person name="Fujiwara T."/>
            <person name="Ono T."/>
            <person name="Yamada K."/>
            <person name="Fujii Y."/>
            <person name="Ozaki K."/>
            <person name="Hirao M."/>
            <person name="Ohmori Y."/>
            <person name="Kawabata A."/>
            <person name="Hikiji T."/>
            <person name="Kobatake N."/>
            <person name="Inagaki H."/>
            <person name="Ikema Y."/>
            <person name="Okamoto S."/>
            <person name="Okitani R."/>
            <person name="Kawakami T."/>
            <person name="Noguchi S."/>
            <person name="Itoh T."/>
            <person name="Shigeta K."/>
            <person name="Senba T."/>
            <person name="Matsumura K."/>
            <person name="Nakajima Y."/>
            <person name="Mizuno T."/>
            <person name="Morinaga M."/>
            <person name="Sasaki M."/>
            <person name="Togashi T."/>
            <person name="Oyama M."/>
            <person name="Hata H."/>
            <person name="Watanabe M."/>
            <person name="Komatsu T."/>
            <person name="Mizushima-Sugano J."/>
            <person name="Satoh T."/>
            <person name="Shirai Y."/>
            <person name="Takahashi Y."/>
            <person name="Nakagawa K."/>
            <person name="Okumura K."/>
            <person name="Nagase T."/>
            <person name="Nomura N."/>
            <person name="Kikuchi H."/>
            <person name="Masuho Y."/>
            <person name="Yamashita R."/>
            <person name="Nakai K."/>
            <person name="Yada T."/>
            <person name="Nakamura Y."/>
            <person name="Ohara O."/>
            <person name="Isogai T."/>
            <person name="Sugano S."/>
        </authorList>
    </citation>
    <scope>NUCLEOTIDE SEQUENCE [LARGE SCALE MRNA] (ISOFORMS 3 AND 4)</scope>
    <source>
        <tissue>Hippocampus</tissue>
    </source>
</reference>
<reference key="3">
    <citation type="journal article" date="2006" name="Nature">
        <title>The DNA sequence and biological annotation of human chromosome 1.</title>
        <authorList>
            <person name="Gregory S.G."/>
            <person name="Barlow K.F."/>
            <person name="McLay K.E."/>
            <person name="Kaul R."/>
            <person name="Swarbreck D."/>
            <person name="Dunham A."/>
            <person name="Scott C.E."/>
            <person name="Howe K.L."/>
            <person name="Woodfine K."/>
            <person name="Spencer C.C.A."/>
            <person name="Jones M.C."/>
            <person name="Gillson C."/>
            <person name="Searle S."/>
            <person name="Zhou Y."/>
            <person name="Kokocinski F."/>
            <person name="McDonald L."/>
            <person name="Evans R."/>
            <person name="Phillips K."/>
            <person name="Atkinson A."/>
            <person name="Cooper R."/>
            <person name="Jones C."/>
            <person name="Hall R.E."/>
            <person name="Andrews T.D."/>
            <person name="Lloyd C."/>
            <person name="Ainscough R."/>
            <person name="Almeida J.P."/>
            <person name="Ambrose K.D."/>
            <person name="Anderson F."/>
            <person name="Andrew R.W."/>
            <person name="Ashwell R.I.S."/>
            <person name="Aubin K."/>
            <person name="Babbage A.K."/>
            <person name="Bagguley C.L."/>
            <person name="Bailey J."/>
            <person name="Beasley H."/>
            <person name="Bethel G."/>
            <person name="Bird C.P."/>
            <person name="Bray-Allen S."/>
            <person name="Brown J.Y."/>
            <person name="Brown A.J."/>
            <person name="Buckley D."/>
            <person name="Burton J."/>
            <person name="Bye J."/>
            <person name="Carder C."/>
            <person name="Chapman J.C."/>
            <person name="Clark S.Y."/>
            <person name="Clarke G."/>
            <person name="Clee C."/>
            <person name="Cobley V."/>
            <person name="Collier R.E."/>
            <person name="Corby N."/>
            <person name="Coville G.J."/>
            <person name="Davies J."/>
            <person name="Deadman R."/>
            <person name="Dunn M."/>
            <person name="Earthrowl M."/>
            <person name="Ellington A.G."/>
            <person name="Errington H."/>
            <person name="Frankish A."/>
            <person name="Frankland J."/>
            <person name="French L."/>
            <person name="Garner P."/>
            <person name="Garnett J."/>
            <person name="Gay L."/>
            <person name="Ghori M.R.J."/>
            <person name="Gibson R."/>
            <person name="Gilby L.M."/>
            <person name="Gillett W."/>
            <person name="Glithero R.J."/>
            <person name="Grafham D.V."/>
            <person name="Griffiths C."/>
            <person name="Griffiths-Jones S."/>
            <person name="Grocock R."/>
            <person name="Hammond S."/>
            <person name="Harrison E.S.I."/>
            <person name="Hart E."/>
            <person name="Haugen E."/>
            <person name="Heath P.D."/>
            <person name="Holmes S."/>
            <person name="Holt K."/>
            <person name="Howden P.J."/>
            <person name="Hunt A.R."/>
            <person name="Hunt S.E."/>
            <person name="Hunter G."/>
            <person name="Isherwood J."/>
            <person name="James R."/>
            <person name="Johnson C."/>
            <person name="Johnson D."/>
            <person name="Joy A."/>
            <person name="Kay M."/>
            <person name="Kershaw J.K."/>
            <person name="Kibukawa M."/>
            <person name="Kimberley A.M."/>
            <person name="King A."/>
            <person name="Knights A.J."/>
            <person name="Lad H."/>
            <person name="Laird G."/>
            <person name="Lawlor S."/>
            <person name="Leongamornlert D.A."/>
            <person name="Lloyd D.M."/>
            <person name="Loveland J."/>
            <person name="Lovell J."/>
            <person name="Lush M.J."/>
            <person name="Lyne R."/>
            <person name="Martin S."/>
            <person name="Mashreghi-Mohammadi M."/>
            <person name="Matthews L."/>
            <person name="Matthews N.S.W."/>
            <person name="McLaren S."/>
            <person name="Milne S."/>
            <person name="Mistry S."/>
            <person name="Moore M.J.F."/>
            <person name="Nickerson T."/>
            <person name="O'Dell C.N."/>
            <person name="Oliver K."/>
            <person name="Palmeiri A."/>
            <person name="Palmer S.A."/>
            <person name="Parker A."/>
            <person name="Patel D."/>
            <person name="Pearce A.V."/>
            <person name="Peck A.I."/>
            <person name="Pelan S."/>
            <person name="Phelps K."/>
            <person name="Phillimore B.J."/>
            <person name="Plumb R."/>
            <person name="Rajan J."/>
            <person name="Raymond C."/>
            <person name="Rouse G."/>
            <person name="Saenphimmachak C."/>
            <person name="Sehra H.K."/>
            <person name="Sheridan E."/>
            <person name="Shownkeen R."/>
            <person name="Sims S."/>
            <person name="Skuce C.D."/>
            <person name="Smith M."/>
            <person name="Steward C."/>
            <person name="Subramanian S."/>
            <person name="Sycamore N."/>
            <person name="Tracey A."/>
            <person name="Tromans A."/>
            <person name="Van Helmond Z."/>
            <person name="Wall M."/>
            <person name="Wallis J.M."/>
            <person name="White S."/>
            <person name="Whitehead S.L."/>
            <person name="Wilkinson J.E."/>
            <person name="Willey D.L."/>
            <person name="Williams H."/>
            <person name="Wilming L."/>
            <person name="Wray P.W."/>
            <person name="Wu Z."/>
            <person name="Coulson A."/>
            <person name="Vaudin M."/>
            <person name="Sulston J.E."/>
            <person name="Durbin R.M."/>
            <person name="Hubbard T."/>
            <person name="Wooster R."/>
            <person name="Dunham I."/>
            <person name="Carter N.P."/>
            <person name="McVean G."/>
            <person name="Ross M.T."/>
            <person name="Harrow J."/>
            <person name="Olson M.V."/>
            <person name="Beck S."/>
            <person name="Rogers J."/>
            <person name="Bentley D.R."/>
        </authorList>
    </citation>
    <scope>NUCLEOTIDE SEQUENCE [LARGE SCALE GENOMIC DNA]</scope>
</reference>
<reference key="4">
    <citation type="submission" date="2005-09" db="EMBL/GenBank/DDBJ databases">
        <authorList>
            <person name="Mural R.J."/>
            <person name="Istrail S."/>
            <person name="Sutton G.G."/>
            <person name="Florea L."/>
            <person name="Halpern A.L."/>
            <person name="Mobarry C.M."/>
            <person name="Lippert R."/>
            <person name="Walenz B."/>
            <person name="Shatkay H."/>
            <person name="Dew I."/>
            <person name="Miller J.R."/>
            <person name="Flanigan M.J."/>
            <person name="Edwards N.J."/>
            <person name="Bolanos R."/>
            <person name="Fasulo D."/>
            <person name="Halldorsson B.V."/>
            <person name="Hannenhalli S."/>
            <person name="Turner R."/>
            <person name="Yooseph S."/>
            <person name="Lu F."/>
            <person name="Nusskern D.R."/>
            <person name="Shue B.C."/>
            <person name="Zheng X.H."/>
            <person name="Zhong F."/>
            <person name="Delcher A.L."/>
            <person name="Huson D.H."/>
            <person name="Kravitz S.A."/>
            <person name="Mouchard L."/>
            <person name="Reinert K."/>
            <person name="Remington K.A."/>
            <person name="Clark A.G."/>
            <person name="Waterman M.S."/>
            <person name="Eichler E.E."/>
            <person name="Adams M.D."/>
            <person name="Hunkapiller M.W."/>
            <person name="Myers E.W."/>
            <person name="Venter J.C."/>
        </authorList>
    </citation>
    <scope>NUCLEOTIDE SEQUENCE [LARGE SCALE GENOMIC DNA]</scope>
</reference>
<reference key="5">
    <citation type="journal article" date="2004" name="Genome Res.">
        <title>The status, quality, and expansion of the NIH full-length cDNA project: the Mammalian Gene Collection (MGC).</title>
        <authorList>
            <consortium name="The MGC Project Team"/>
        </authorList>
    </citation>
    <scope>NUCLEOTIDE SEQUENCE [LARGE SCALE MRNA] (ISOFORM 2)</scope>
    <source>
        <tissue>Muscle</tissue>
    </source>
</reference>
<reference key="6">
    <citation type="journal article" date="2004" name="Cell. Signal.">
        <title>Diacylglycerol kinase zeta regulates phosphatidylinositol 4-phosphate 5-kinase Ialpha by a novel mechanism.</title>
        <authorList>
            <person name="Luo B."/>
            <person name="Prescott S.M."/>
            <person name="Topham M.K."/>
        </authorList>
    </citation>
    <scope>INTERACTION WITH DGKZ</scope>
    <scope>SUBCELLULAR LOCATION</scope>
</reference>
<reference key="7">
    <citation type="journal article" date="2008" name="Nature">
        <title>A PtdIns4,5P2-regulated nuclear poly(A) polymerase controls expression of select mRNAs.</title>
        <authorList>
            <person name="Mellman D.L."/>
            <person name="Gonzales M.L."/>
            <person name="Song C."/>
            <person name="Barlow C.A."/>
            <person name="Wang P."/>
            <person name="Kendziorski C."/>
            <person name="Anderson R.A."/>
        </authorList>
    </citation>
    <scope>FUNCTION</scope>
    <scope>INTERACTION WITH TUT1</scope>
</reference>
<reference key="8">
    <citation type="journal article" date="2009" name="Mol. Biol. Cell">
        <title>Phosphatidylinositol-4-phosphate 5-kinase 1alpha mediates extracellular calcium-induced keratinocyte differentiation.</title>
        <authorList>
            <person name="Xie Z."/>
            <person name="Chang S.M."/>
            <person name="Pennypacker S.D."/>
            <person name="Liao E.-Y."/>
            <person name="Bikle D.D."/>
        </authorList>
    </citation>
    <scope>FUNCTION IN KERATINOCYTE DIFFERENTIATION</scope>
    <scope>SUBCELLULAR LOCATION</scope>
    <scope>IDENTIFICATION IN A COMPLEX WITH CDH1; CTNNB1 AND CTNND1</scope>
</reference>
<reference key="9">
    <citation type="journal article" date="2010" name="J. Cell Biol.">
        <title>Type I PIPK-alpha regulates directed cell migration by modulating Rac1 plasma membrane targeting and activation.</title>
        <authorList>
            <person name="Chao W.-T."/>
            <person name="Daquinag A.C."/>
            <person name="Ashcroft F."/>
            <person name="Kunz J."/>
        </authorList>
    </citation>
    <scope>FUNCTION IN CELL MIGRATION</scope>
    <scope>SUBCELLULAR LOCATION</scope>
    <scope>MUTAGENESIS OF ASP-322 AND ARG-440</scope>
</reference>
<reference key="10">
    <citation type="journal article" date="2010" name="Sci. Signal.">
        <title>Quantitative phosphoproteomics reveals widespread full phosphorylation site occupancy during mitosis.</title>
        <authorList>
            <person name="Olsen J.V."/>
            <person name="Vermeulen M."/>
            <person name="Santamaria A."/>
            <person name="Kumar C."/>
            <person name="Miller M.L."/>
            <person name="Jensen L.J."/>
            <person name="Gnad F."/>
            <person name="Cox J."/>
            <person name="Jensen T.S."/>
            <person name="Nigg E.A."/>
            <person name="Brunak S."/>
            <person name="Mann M."/>
        </authorList>
    </citation>
    <scope>IDENTIFICATION BY MASS SPECTROMETRY [LARGE SCALE ANALYSIS]</scope>
    <source>
        <tissue>Cervix carcinoma</tissue>
    </source>
</reference>
<reference key="11">
    <citation type="journal article" date="2011" name="BMC Syst. Biol.">
        <title>Initial characterization of the human central proteome.</title>
        <authorList>
            <person name="Burkard T.R."/>
            <person name="Planyavsky M."/>
            <person name="Kaupe I."/>
            <person name="Breitwieser F.P."/>
            <person name="Buerckstuemmer T."/>
            <person name="Bennett K.L."/>
            <person name="Superti-Furga G."/>
            <person name="Colinge J."/>
        </authorList>
    </citation>
    <scope>IDENTIFICATION BY MASS SPECTROMETRY [LARGE SCALE ANALYSIS]</scope>
</reference>
<reference key="12">
    <citation type="journal article" date="2011" name="J. Mol. Biol.">
        <title>Study of arachidonoyl specificity in two enzymes of the PI cycle.</title>
        <authorList>
            <person name="Shulga Y.V."/>
            <person name="Topham M.K."/>
            <person name="Epand R.M."/>
        </authorList>
    </citation>
    <scope>FUNCTION</scope>
    <scope>CATALYTIC ACTIVITY</scope>
    <scope>BIOPHYSICOCHEMICAL PROPERTIES</scope>
    <scope>SUBSTRATE SPECIFICITY</scope>
    <scope>MUTAGENESIS OF LEU-215</scope>
</reference>
<reference key="13">
    <citation type="journal article" date="2012" name="J. Biol. Chem.">
        <title>Phosphatidylinositol-4-phosphate 5-kinase isoforms exhibit acyl chain selectivity for both substrate and lipid activator.</title>
        <authorList>
            <person name="Shulga Y.V."/>
            <person name="Anderson R.A."/>
            <person name="Topham M.K."/>
            <person name="Epand R.M."/>
        </authorList>
    </citation>
    <scope>FUNCTION</scope>
    <scope>CATALYTIC ACTIVITY</scope>
    <scope>BIOPHYSICOCHEMICAL PROPERTIES</scope>
    <scope>MUTAGENESIS OF LEU-215; LEU-223 AND ASP-322</scope>
</reference>
<reference key="14">
    <citation type="journal article" date="2013" name="J. Proteome Res.">
        <title>Toward a comprehensive characterization of a human cancer cell phosphoproteome.</title>
        <authorList>
            <person name="Zhou H."/>
            <person name="Di Palma S."/>
            <person name="Preisinger C."/>
            <person name="Peng M."/>
            <person name="Polat A.N."/>
            <person name="Heck A.J."/>
            <person name="Mohammed S."/>
        </authorList>
    </citation>
    <scope>PHOSPHORYLATION [LARGE SCALE ANALYSIS] AT SER-486</scope>
    <scope>IDENTIFICATION BY MASS SPECTROMETRY [LARGE SCALE ANALYSIS]</scope>
    <source>
        <tissue>Erythroleukemia</tissue>
    </source>
</reference>
<reference key="15">
    <citation type="journal article" date="2019" name="Cell Rep.">
        <title>PIP4Ks Suppress Insulin Signaling through a Catalytic-Independent Mechanism.</title>
        <authorList>
            <person name="Wang D.G."/>
            <person name="Paddock M.N."/>
            <person name="Lundquist M.R."/>
            <person name="Sun J.Y."/>
            <person name="Mashadova O."/>
            <person name="Amadiume S."/>
            <person name="Bumpus T.W."/>
            <person name="Hodakoski C."/>
            <person name="Hopkins B.D."/>
            <person name="Fine M."/>
            <person name="Hill A."/>
            <person name="Yang T.J."/>
            <person name="Baskin J.M."/>
            <person name="Dow L.E."/>
            <person name="Cantley L.C."/>
        </authorList>
    </citation>
    <scope>INTERACTION WITH PIP4K2C</scope>
    <scope>CATALYTIC ACTIVITY</scope>
</reference>
<organism>
    <name type="scientific">Homo sapiens</name>
    <name type="common">Human</name>
    <dbReference type="NCBI Taxonomy" id="9606"/>
    <lineage>
        <taxon>Eukaryota</taxon>
        <taxon>Metazoa</taxon>
        <taxon>Chordata</taxon>
        <taxon>Craniata</taxon>
        <taxon>Vertebrata</taxon>
        <taxon>Euteleostomi</taxon>
        <taxon>Mammalia</taxon>
        <taxon>Eutheria</taxon>
        <taxon>Euarchontoglires</taxon>
        <taxon>Primates</taxon>
        <taxon>Haplorrhini</taxon>
        <taxon>Catarrhini</taxon>
        <taxon>Hominidae</taxon>
        <taxon>Homo</taxon>
    </lineage>
</organism>
<comment type="function">
    <text evidence="1 5 6 7 8 9 11">Catalyzes the phosphorylation of phosphatidylinositol 4-phosphate (PtdIns(4)P/PI4P) to form phosphatidylinositol 4,5-bisphosphate (PtdIns(4,5)P2/PIP2), a lipid second messenger that regulates several cellular processes such as signal transduction, vesicle trafficking, actin cytoskeleton dynamics, cell adhesion, and cell motility (PubMed:21477596, PubMed:22942276, PubMed:8955136). PtdIns(4,5)P2 can directly act as a second messenger or can be utilized as a precursor to generate other second messengers: inositol 1,4,5-trisphosphate (IP3), diacylglycerol (DAG) or phosphatidylinositol-3,4,5-trisphosphate (PtdIns(3,4,5)P3/PIP3) (PubMed:19158393, PubMed:20660631). PIP5K1A-mediated phosphorylation of PtdIns(4)P is the predominant pathway for PtdIns(4,5)P2 synthesis (By similarity). Can also use phosphatidylinositol (PtdIns) as substrate in vitro (PubMed:22942276). Together with PIP5K1C, is required for phagocytosis, both enzymes regulating different types of actin remodeling at sequential steps (By similarity). Promotes particle ingestion by activating the WAS GTPase-binding protein that induces Arp2/3 dependent actin polymerization at the nascent phagocytic cup (By similarity). Together with PIP5K1B, is required, after stimulation by G-protein coupled receptors, for the synthesis of IP3 that will induce stable platelet adhesion (By similarity). Recruited to the plasma membrane by the E-cadherin/beta-catenin complex where it provides the substrate PtdIns(4,5)P2 for the production of PtdIns(3,4,5)P3, IP3 and DAG, that will mobilize internal calcium and drive keratinocyte differentiation (PubMed:19158393). Positively regulates insulin-induced translocation of SLC2A4 to the cell membrane in adipocytes (By similarity). Together with PIP5K1C has a role during embryogenesis (By similarity). Independently of its catalytic activity, is required for membrane ruffling formation, actin organization and focal adhesion formation during directional cell migration by controlling integrin-induced translocation of the small GTPase RAC1 to the plasma membrane (PubMed:20660631). Also functions in the nucleus where it acts as an activator of TUT1 adenylyltransferase activity in nuclear speckles, thereby regulating mRNA polyadenylation of a select set of mRNAs (PubMed:18288197).</text>
</comment>
<comment type="catalytic activity">
    <reaction evidence="8 9 10 11">
        <text>a 1,2-diacyl-sn-glycero-3-phospho-(1D-myo-inositol 4-phosphate) + ATP = a 1,2-diacyl-sn-glycero-3-phospho-(1D-myo-inositol-4,5-bisphosphate) + ADP + H(+)</text>
        <dbReference type="Rhea" id="RHEA:14425"/>
        <dbReference type="ChEBI" id="CHEBI:15378"/>
        <dbReference type="ChEBI" id="CHEBI:30616"/>
        <dbReference type="ChEBI" id="CHEBI:58178"/>
        <dbReference type="ChEBI" id="CHEBI:58456"/>
        <dbReference type="ChEBI" id="CHEBI:456216"/>
        <dbReference type="EC" id="2.7.1.68"/>
    </reaction>
    <physiologicalReaction direction="left-to-right" evidence="18 19 20 21">
        <dbReference type="Rhea" id="RHEA:14426"/>
    </physiologicalReaction>
</comment>
<comment type="catalytic activity">
    <reaction evidence="8 9">
        <text>1-octadecanoyl-2-(5Z,8Z,11Z,14Z)-eicosatetraenoyl-sn-glycero-3-phospho-1D-myo-inositol 4-phosphate + ATP = 1-octadecanoyl-2-(5Z,8Z,11Z,14Z)-eicosatetraenoyl-sn-glycero-3-phospho-1D-myo-inositol 4,5-bisphosphate + ADP + H(+)</text>
        <dbReference type="Rhea" id="RHEA:40363"/>
        <dbReference type="ChEBI" id="CHEBI:15378"/>
        <dbReference type="ChEBI" id="CHEBI:30616"/>
        <dbReference type="ChEBI" id="CHEBI:77136"/>
        <dbReference type="ChEBI" id="CHEBI:77137"/>
        <dbReference type="ChEBI" id="CHEBI:456216"/>
    </reaction>
    <physiologicalReaction direction="left-to-right" evidence="18 19">
        <dbReference type="Rhea" id="RHEA:40364"/>
    </physiologicalReaction>
</comment>
<comment type="catalytic activity">
    <reaction evidence="8">
        <text>1,2-dihexadecanoyl-sn-glycero-3-phospho-(1D-myo-inositol-4-phosphate) + ATP = 1,2-dihexadecanoyl-sn-glycero-3-phospho-(1D-myo-inositol-4,5-bisphosphate) + ADP + H(+)</text>
        <dbReference type="Rhea" id="RHEA:65356"/>
        <dbReference type="ChEBI" id="CHEBI:15378"/>
        <dbReference type="ChEBI" id="CHEBI:30616"/>
        <dbReference type="ChEBI" id="CHEBI:83423"/>
        <dbReference type="ChEBI" id="CHEBI:83436"/>
        <dbReference type="ChEBI" id="CHEBI:456216"/>
    </reaction>
    <physiologicalReaction direction="left-to-right" evidence="18">
        <dbReference type="Rhea" id="RHEA:65357"/>
    </physiologicalReaction>
</comment>
<comment type="catalytic activity">
    <reaction evidence="9">
        <text>1-octadecanoyl-2-(9Z)-octadecenoyl-sn-glycero-3-phospho-1D-myo-inositol 4-phosphate + ATP = 1-octadecanoyl-2-(9Z)-octadecenoyl-sn-glycero-3-phospho-1D-myo-inositol 4,5-bisphosphate + ADP + H(+)</text>
        <dbReference type="Rhea" id="RHEA:40367"/>
        <dbReference type="ChEBI" id="CHEBI:15378"/>
        <dbReference type="ChEBI" id="CHEBI:30616"/>
        <dbReference type="ChEBI" id="CHEBI:77139"/>
        <dbReference type="ChEBI" id="CHEBI:77140"/>
        <dbReference type="ChEBI" id="CHEBI:456216"/>
    </reaction>
    <physiologicalReaction direction="left-to-right" evidence="19">
        <dbReference type="Rhea" id="RHEA:40368"/>
    </physiologicalReaction>
</comment>
<comment type="catalytic activity">
    <reaction evidence="9">
        <text>1-octadecanoyl-2-(9Z)-octadecenoyl-sn-glycero-3-phospho-1D-myo-inositol + ATP = 1-octadecanoyl-2-(9Z)-octadecenoyl-sn-glycero-3-phospho-1D-myo-inositol 5-phosphate + ADP + H(+)</text>
        <dbReference type="Rhea" id="RHEA:40379"/>
        <dbReference type="ChEBI" id="CHEBI:15378"/>
        <dbReference type="ChEBI" id="CHEBI:30616"/>
        <dbReference type="ChEBI" id="CHEBI:77163"/>
        <dbReference type="ChEBI" id="CHEBI:77164"/>
        <dbReference type="ChEBI" id="CHEBI:456216"/>
    </reaction>
    <physiologicalReaction direction="left-to-right" evidence="19">
        <dbReference type="Rhea" id="RHEA:40380"/>
    </physiologicalReaction>
</comment>
<comment type="catalytic activity">
    <reaction evidence="9">
        <text>1-octadecanoyl-2-(9Z,12Z)-octadecadienoyl-sn-glycero-3-phospho-1D-myo-inositol + ATP = 1-octadecanoyl-2-(9Z,12Z)-octadecadienoyl-sn-glycero-3-phospho-1D-myo-inositol 5-phosphate + ADP + H(+)</text>
        <dbReference type="Rhea" id="RHEA:40383"/>
        <dbReference type="ChEBI" id="CHEBI:15378"/>
        <dbReference type="ChEBI" id="CHEBI:30616"/>
        <dbReference type="ChEBI" id="CHEBI:77158"/>
        <dbReference type="ChEBI" id="CHEBI:77159"/>
        <dbReference type="ChEBI" id="CHEBI:456216"/>
    </reaction>
    <physiologicalReaction direction="left-to-right" evidence="19">
        <dbReference type="Rhea" id="RHEA:40384"/>
    </physiologicalReaction>
</comment>
<comment type="catalytic activity">
    <reaction evidence="9">
        <text>1-octadecanoyl-2-(5Z,8Z,11Z,14Z-eicosatetraenoyl)-sn-glycero-3-phospho-(1D-myo-inositol) + ATP = 1-octadecanoyl-2-(5Z,8Z,11Z,14Z)-eicosatetraenoyl-sn-glycero-3-phospho-1D-myo-inositol 5-phosphate + ADP + H(+)</text>
        <dbReference type="Rhea" id="RHEA:40375"/>
        <dbReference type="ChEBI" id="CHEBI:15378"/>
        <dbReference type="ChEBI" id="CHEBI:30616"/>
        <dbReference type="ChEBI" id="CHEBI:77160"/>
        <dbReference type="ChEBI" id="CHEBI:133606"/>
        <dbReference type="ChEBI" id="CHEBI:456216"/>
    </reaction>
    <physiologicalReaction direction="left-to-right" evidence="19">
        <dbReference type="Rhea" id="RHEA:40376"/>
    </physiologicalReaction>
</comment>
<comment type="catalytic activity">
    <reaction evidence="9">
        <text>1,2-di-(9Z,12Z)-octadecadienoyl-sn-glycero-3-phospho-1D-myo-inositol + ATP = 1,2-di(9Z,12Z)-octadecadienoyl-sn-glycero-3-phospho-1D-myo-inositol 5-phosphate + ADP + H(+)</text>
        <dbReference type="Rhea" id="RHEA:40387"/>
        <dbReference type="ChEBI" id="CHEBI:15378"/>
        <dbReference type="ChEBI" id="CHEBI:30616"/>
        <dbReference type="ChEBI" id="CHEBI:77165"/>
        <dbReference type="ChEBI" id="CHEBI:77167"/>
        <dbReference type="ChEBI" id="CHEBI:456216"/>
    </reaction>
    <physiologicalReaction direction="left-to-right" evidence="19">
        <dbReference type="Rhea" id="RHEA:40388"/>
    </physiologicalReaction>
</comment>
<comment type="activity regulation">
    <text evidence="9">Activated by diarachidonoyl phosphatidic acid (DAPA), when 1,2-dipalmitoyl-PI4P is used as a substrate.</text>
</comment>
<comment type="biophysicochemical properties">
    <kinetics>
        <KM evidence="8">0.3 uM for 1-octadecanoyl-2-(5Z,8Z,11Z,14Z)-eicosatetraenoyl-sn-glycero-3-phospho-1D-myo-inositol 4-phosphate</KM>
        <KM evidence="9">2.8 uM for 1-octadecanoyl-2-(5Z,8Z,11Z,14Z)-eicosatetraenoyl-sn-glycero-3-phospho-1D-myo-inositol 4-phosphate</KM>
        <KM evidence="9">16 uM for 1-octadecanoyl-2-(9Z)-octadecenoyl-sn-glycero-3-phospho-1D-myo-inositol 4-phosphate</KM>
    </kinetics>
</comment>
<comment type="subunit">
    <text evidence="1 4 5 10">Interacts with RAC1 (By similarity). Interacts with TUT1 (PubMed:18288197). Forms a complex with CDH1/E-cadherin, CTNNB1/beta-catenin and CTNND1 at the plasma membrane upon calcium stimulation (PubMed:18288197). Found in a ternary complex with IRS1 and DGKZ in the absence of insulin stimulation (By similarity). Interacts with DGKZ (PubMed:15157668). Interacts with PIP4K2C; the interaction inhibits PIP5K1A kinase activity (PubMed:31091439).</text>
</comment>
<comment type="interaction">
    <interactant intactId="EBI-726414">
        <id>Q99755</id>
    </interactant>
    <interactant intactId="EBI-367415">
        <id>P01116</id>
        <label>KRAS</label>
    </interactant>
    <organismsDiffer>false</organismsDiffer>
    <experiments>9</experiments>
</comment>
<comment type="interaction">
    <interactant intactId="EBI-726414">
        <id>Q99755</id>
    </interactant>
    <interactant intactId="EBI-2511680">
        <id>Q9H6E5</id>
        <label>TUT1</label>
    </interactant>
    <organismsDiffer>false</organismsDiffer>
    <experiments>3</experiments>
</comment>
<comment type="interaction">
    <interactant intactId="EBI-15687389">
        <id>Q99755-1</id>
    </interactant>
    <interactant intactId="EBI-2511680">
        <id>Q9H6E5</id>
        <label>TUT1</label>
    </interactant>
    <organismsDiffer>false</organismsDiffer>
    <experiments>2</experiments>
</comment>
<comment type="subcellular location">
    <subcellularLocation>
        <location evidence="1">Cell membrane</location>
    </subcellularLocation>
    <subcellularLocation>
        <location evidence="1">Cytoplasm</location>
    </subcellularLocation>
    <subcellularLocation>
        <location evidence="4">Nucleus</location>
    </subcellularLocation>
    <subcellularLocation>
        <location evidence="5">Nucleus speckle</location>
    </subcellularLocation>
    <subcellularLocation>
        <location evidence="7">Cell projection</location>
        <location evidence="7">Ruffle</location>
    </subcellularLocation>
    <subcellularLocation>
        <location evidence="4">Cell projection</location>
        <location evidence="4">Lamellipodium</location>
    </subcellularLocation>
    <text evidence="5 7">Colocalizes with RAC1 at actin-rich membrane ruffles (PubMed:20660631). Localizes to nuclear speckles and associates with TUT1 to regulate polyadenylation of selected mRNAs (PubMed:18288197).</text>
</comment>
<comment type="alternative products">
    <event type="alternative splicing"/>
    <isoform>
        <id>Q99755-1</id>
        <name>1</name>
        <name evidence="15">PIP5KIalpha2</name>
        <sequence type="displayed"/>
    </isoform>
    <isoform>
        <id>Q99755-2</id>
        <name>2</name>
        <name evidence="15">PIP5KIalpha3</name>
        <sequence type="described" ref="VSP_016007 VSP_016008"/>
    </isoform>
    <isoform>
        <id>Q99755-3</id>
        <name>3</name>
        <name evidence="15">PIP5KIalpha1</name>
        <sequence type="described" ref="VSP_016007"/>
    </isoform>
    <isoform>
        <id>Q99755-4</id>
        <name>4</name>
        <sequence type="described" ref="VSP_041912 VSP_041913"/>
    </isoform>
</comment>
<comment type="tissue specificity">
    <text evidence="11">Highly expressed in heart, placenta, skeletal muscle, kidney and pancreas. Detected at lower levels in brain, lung and liver.</text>
</comment>
<comment type="caution">
    <text evidence="16">There is confusion in the literature with phosphatidylinositol 4-phosphate 5-kinase type I nomenclature due to the fact that frequently mouse PIP5K1B is named Phosphatidylinositol 4-phosphate 5-kinase type I alpha.</text>
</comment>
<feature type="chain" id="PRO_0000185456" description="Phosphatidylinositol 4-phosphate 5-kinase type-1 alpha">
    <location>
        <begin position="1"/>
        <end position="562"/>
    </location>
</feature>
<feature type="domain" description="PIPK" evidence="2">
    <location>
        <begin position="81"/>
        <end position="449"/>
    </location>
</feature>
<feature type="region of interest" description="Disordered" evidence="3">
    <location>
        <begin position="506"/>
        <end position="526"/>
    </location>
</feature>
<feature type="modified residue" description="Phosphoserine" evidence="23">
    <location>
        <position position="486"/>
    </location>
</feature>
<feature type="cross-link" description="Glycyl lysine isopeptide (Lys-Gly) (interchain with G-Cter in ubiquitin)">
    <location>
        <position position="103"/>
    </location>
</feature>
<feature type="splice variant" id="VSP_016007" description="In isoform 2 and isoform 3." evidence="12 13 15">
    <original>ASGIKRPMASEVLEARQDSYISL</original>
    <variation>SGIKRPMASE</variation>
    <location>
        <begin position="30"/>
        <end position="52"/>
    </location>
</feature>
<feature type="splice variant" id="VSP_041912" description="In isoform 4." evidence="12">
    <location>
        <begin position="41"/>
        <end position="52"/>
    </location>
</feature>
<feature type="splice variant" id="VSP_041913" description="In isoform 4." evidence="12">
    <original>HMGGIPARNSKGERLLLYIGIIDILQSYR</original>
    <variation>Q</variation>
    <location>
        <begin position="382"/>
        <end position="410"/>
    </location>
</feature>
<feature type="splice variant" id="VSP_016008" description="In isoform 2." evidence="13 15">
    <original>LKPSPSKKFRSGSSFSRRAGSSGNSCITYQPSVSGEHKAQVTTKAEVEPG</original>
    <variation>C</variation>
    <location>
        <begin position="455"/>
        <end position="504"/>
    </location>
</feature>
<feature type="mutagenesis site" description="Decreased 1-phosphatidylinositol-4-phosphate 5-kinase activity with 1-octadecanoyl-2-(5Z,8Z,11Z,14Z)-eicosatetraenoyl-sn-glycero-3-phospho-1D-myo-inositol 4-phosphate (arachidonate-PtdIns4P) as substrate. Increased enzyme activation by diarachidonoyl phosphatidic acid (DAPA). No change in enzyme activation by 1-stearoyl-2-oleoyl phosphatidic acid (SOPA) or 1-stearoyl-2-arachidonoyl phosphatidic acid (SAPA)." evidence="8 9">
    <original>L</original>
    <variation>I</variation>
    <location>
        <position position="215"/>
    </location>
</feature>
<feature type="mutagenesis site" description="Decreased 1-phosphatidylinositol-4-phosphate 5-kinase activity with 1-octadecanoyl-2-(5Z,8Z,11Z,14Z)-eicosatetraenoyl-sn-glycero-3-phospho-1D-myo-inositol 4-phosphate (arachidonate-PtdIns4P) as substrate. Increased enzyme activation by diarachidonoyl phosphatidic acid (DAPA). No change in enzyme activation by 1-stearoyl-2-oleoyl phosphatidic acid (SOPA) or 1-stearoyl-2-arachidonoyl phosphatidic acid (SAPA)." evidence="9">
    <original>L</original>
    <variation>I</variation>
    <location>
        <position position="223"/>
    </location>
</feature>
<feature type="mutagenesis site" description="Increased enzyme activation by diarachidonoyl phosphatidic acid (DAPA)." evidence="9">
    <original>D</original>
    <variation>A</variation>
    <location>
        <position position="322"/>
    </location>
</feature>
<feature type="mutagenesis site" description="Does not affect targeting of RAC1 to the plasma membrane; when associated with Q-440." evidence="7">
    <original>D</original>
    <variation>N</variation>
    <location>
        <position position="322"/>
    </location>
</feature>
<feature type="mutagenesis site" description="Does not affect targeting of RAC1 to the plasma membrane; when associated with N-322." evidence="7">
    <original>R</original>
    <variation>Q</variation>
    <location>
        <position position="440"/>
    </location>
</feature>
<feature type="sequence conflict" description="In Ref. 2; BAG58542." evidence="16" ref="2">
    <original>K</original>
    <variation>E</variation>
    <location>
        <position position="257"/>
    </location>
</feature>
<dbReference type="EC" id="2.7.1.68" evidence="8 9 11"/>
<dbReference type="EMBL" id="U78575">
    <property type="protein sequence ID" value="AAC50910.1"/>
    <property type="molecule type" value="mRNA"/>
</dbReference>
<dbReference type="EMBL" id="U78576">
    <property type="protein sequence ID" value="AAC50911.1"/>
    <property type="molecule type" value="mRNA"/>
</dbReference>
<dbReference type="EMBL" id="U78577">
    <property type="protein sequence ID" value="AAC50912.1"/>
    <property type="molecule type" value="mRNA"/>
</dbReference>
<dbReference type="EMBL" id="AK291015">
    <property type="protein sequence ID" value="BAF83704.1"/>
    <property type="molecule type" value="mRNA"/>
</dbReference>
<dbReference type="EMBL" id="AK295691">
    <property type="protein sequence ID" value="BAG58542.1"/>
    <property type="molecule type" value="mRNA"/>
</dbReference>
<dbReference type="EMBL" id="AL592424">
    <property type="status" value="NOT_ANNOTATED_CDS"/>
    <property type="molecule type" value="Genomic_DNA"/>
</dbReference>
<dbReference type="EMBL" id="CH471121">
    <property type="protein sequence ID" value="EAW53461.1"/>
    <property type="molecule type" value="Genomic_DNA"/>
</dbReference>
<dbReference type="EMBL" id="BC007833">
    <property type="protein sequence ID" value="AAH07833.1"/>
    <property type="molecule type" value="mRNA"/>
</dbReference>
<dbReference type="CCDS" id="CCDS44219.1">
    <molecule id="Q99755-1"/>
</dbReference>
<dbReference type="CCDS" id="CCDS44220.1">
    <molecule id="Q99755-4"/>
</dbReference>
<dbReference type="CCDS" id="CCDS44221.1">
    <molecule id="Q99755-2"/>
</dbReference>
<dbReference type="CCDS" id="CCDS990.1">
    <molecule id="Q99755-3"/>
</dbReference>
<dbReference type="RefSeq" id="NP_001129108.1">
    <molecule id="Q99755-4"/>
    <property type="nucleotide sequence ID" value="NM_001135636.2"/>
</dbReference>
<dbReference type="RefSeq" id="NP_001129109.1">
    <molecule id="Q99755-2"/>
    <property type="nucleotide sequence ID" value="NM_001135637.2"/>
</dbReference>
<dbReference type="RefSeq" id="NP_001129110.1">
    <molecule id="Q99755-1"/>
    <property type="nucleotide sequence ID" value="NM_001135638.2"/>
</dbReference>
<dbReference type="RefSeq" id="NP_001317618.1">
    <property type="nucleotide sequence ID" value="NM_001330689.1"/>
</dbReference>
<dbReference type="RefSeq" id="NP_003548.1">
    <molecule id="Q99755-3"/>
    <property type="nucleotide sequence ID" value="NM_003557.3"/>
</dbReference>
<dbReference type="SMR" id="Q99755"/>
<dbReference type="BioGRID" id="113983">
    <property type="interactions" value="162"/>
</dbReference>
<dbReference type="DIP" id="DIP-60649N"/>
<dbReference type="FunCoup" id="Q99755">
    <property type="interactions" value="2853"/>
</dbReference>
<dbReference type="IntAct" id="Q99755">
    <property type="interactions" value="83"/>
</dbReference>
<dbReference type="MINT" id="Q99755"/>
<dbReference type="STRING" id="9606.ENSP00000357883"/>
<dbReference type="BindingDB" id="Q99755"/>
<dbReference type="ChEMBL" id="CHEMBL5969"/>
<dbReference type="DrugCentral" id="Q99755"/>
<dbReference type="SwissLipids" id="SLP:000000553">
    <molecule id="Q99755-3"/>
</dbReference>
<dbReference type="SwissLipids" id="SLP:000000554"/>
<dbReference type="iPTMnet" id="Q99755"/>
<dbReference type="PhosphoSitePlus" id="Q99755"/>
<dbReference type="SwissPalm" id="Q99755"/>
<dbReference type="BioMuta" id="PIP5K1A"/>
<dbReference type="DMDM" id="74752158"/>
<dbReference type="CPTAC" id="non-CPTAC-5676"/>
<dbReference type="jPOST" id="Q99755"/>
<dbReference type="MassIVE" id="Q99755"/>
<dbReference type="PaxDb" id="9606-ENSP00000357883"/>
<dbReference type="PeptideAtlas" id="Q99755"/>
<dbReference type="ProteomicsDB" id="78458">
    <molecule id="Q99755-1"/>
</dbReference>
<dbReference type="ProteomicsDB" id="78459">
    <molecule id="Q99755-2"/>
</dbReference>
<dbReference type="ProteomicsDB" id="78460">
    <molecule id="Q99755-3"/>
</dbReference>
<dbReference type="ProteomicsDB" id="78461">
    <molecule id="Q99755-4"/>
</dbReference>
<dbReference type="Pumba" id="Q99755"/>
<dbReference type="Antibodypedia" id="34058">
    <property type="antibodies" value="200 antibodies from 29 providers"/>
</dbReference>
<dbReference type="DNASU" id="8394"/>
<dbReference type="Ensembl" id="ENST00000349792.9">
    <molecule id="Q99755-3"/>
    <property type="protein sequence ID" value="ENSP00000271663.7"/>
    <property type="gene ID" value="ENSG00000143398.20"/>
</dbReference>
<dbReference type="Ensembl" id="ENST00000368888.9">
    <molecule id="Q99755-1"/>
    <property type="protein sequence ID" value="ENSP00000357883.4"/>
    <property type="gene ID" value="ENSG00000143398.20"/>
</dbReference>
<dbReference type="Ensembl" id="ENST00000368890.8">
    <molecule id="Q99755-2"/>
    <property type="protein sequence ID" value="ENSP00000357885.4"/>
    <property type="gene ID" value="ENSG00000143398.20"/>
</dbReference>
<dbReference type="Ensembl" id="ENST00000441902.6">
    <molecule id="Q99755-4"/>
    <property type="protein sequence ID" value="ENSP00000415648.2"/>
    <property type="gene ID" value="ENSG00000143398.20"/>
</dbReference>
<dbReference type="GeneID" id="8394"/>
<dbReference type="KEGG" id="hsa:8394"/>
<dbReference type="MANE-Select" id="ENST00000368888.9">
    <property type="protein sequence ID" value="ENSP00000357883.4"/>
    <property type="RefSeq nucleotide sequence ID" value="NM_001135638.2"/>
    <property type="RefSeq protein sequence ID" value="NP_001129110.1"/>
</dbReference>
<dbReference type="UCSC" id="uc001exi.4">
    <molecule id="Q99755-1"/>
    <property type="organism name" value="human"/>
</dbReference>
<dbReference type="AGR" id="HGNC:8994"/>
<dbReference type="CTD" id="8394"/>
<dbReference type="DisGeNET" id="8394"/>
<dbReference type="GeneCards" id="PIP5K1A"/>
<dbReference type="HGNC" id="HGNC:8994">
    <property type="gene designation" value="PIP5K1A"/>
</dbReference>
<dbReference type="HPA" id="ENSG00000143398">
    <property type="expression patterns" value="Low tissue specificity"/>
</dbReference>
<dbReference type="MIM" id="603275">
    <property type="type" value="gene"/>
</dbReference>
<dbReference type="neXtProt" id="NX_Q99755"/>
<dbReference type="OpenTargets" id="ENSG00000143398"/>
<dbReference type="PharmGKB" id="PA33327"/>
<dbReference type="VEuPathDB" id="HostDB:ENSG00000143398"/>
<dbReference type="eggNOG" id="KOG0229">
    <property type="taxonomic scope" value="Eukaryota"/>
</dbReference>
<dbReference type="GeneTree" id="ENSGT00940000154703"/>
<dbReference type="HOGENOM" id="CLU_004312_5_1_1"/>
<dbReference type="InParanoid" id="Q99755"/>
<dbReference type="OMA" id="CIFYADD"/>
<dbReference type="OrthoDB" id="70770at2759"/>
<dbReference type="PAN-GO" id="Q99755">
    <property type="GO annotations" value="3 GO annotations based on evolutionary models"/>
</dbReference>
<dbReference type="PhylomeDB" id="Q99755"/>
<dbReference type="TreeFam" id="TF319618"/>
<dbReference type="BioCyc" id="MetaCyc:HS07047-MONOMER"/>
<dbReference type="BRENDA" id="2.7.1.68">
    <property type="organism ID" value="2681"/>
</dbReference>
<dbReference type="PathwayCommons" id="Q99755"/>
<dbReference type="Reactome" id="R-HSA-1660499">
    <property type="pathway name" value="Synthesis of PIPs at the plasma membrane"/>
</dbReference>
<dbReference type="Reactome" id="R-HSA-6811558">
    <property type="pathway name" value="PI5P, PP2A and IER3 Regulate PI3K/AKT Signaling"/>
</dbReference>
<dbReference type="SignaLink" id="Q99755"/>
<dbReference type="SIGNOR" id="Q99755"/>
<dbReference type="BioGRID-ORCS" id="8394">
    <property type="hits" value="125 hits in 1181 CRISPR screens"/>
</dbReference>
<dbReference type="ChiTaRS" id="PIP5K1A">
    <property type="organism name" value="human"/>
</dbReference>
<dbReference type="GeneWiki" id="PIP5K1A"/>
<dbReference type="GenomeRNAi" id="8394"/>
<dbReference type="Pharos" id="Q99755">
    <property type="development level" value="Tbio"/>
</dbReference>
<dbReference type="PRO" id="PR:Q99755"/>
<dbReference type="Proteomes" id="UP000005640">
    <property type="component" value="Chromosome 1"/>
</dbReference>
<dbReference type="RNAct" id="Q99755">
    <property type="molecule type" value="protein"/>
</dbReference>
<dbReference type="Bgee" id="ENSG00000143398">
    <property type="expression patterns" value="Expressed in right testis and 188 other cell types or tissues"/>
</dbReference>
<dbReference type="ExpressionAtlas" id="Q99755">
    <property type="expression patterns" value="baseline and differential"/>
</dbReference>
<dbReference type="GO" id="GO:0005829">
    <property type="term" value="C:cytosol"/>
    <property type="evidence" value="ECO:0000314"/>
    <property type="project" value="HPA"/>
</dbReference>
<dbReference type="GO" id="GO:0005925">
    <property type="term" value="C:focal adhesion"/>
    <property type="evidence" value="ECO:0007005"/>
    <property type="project" value="UniProtKB"/>
</dbReference>
<dbReference type="GO" id="GO:0030027">
    <property type="term" value="C:lamellipodium"/>
    <property type="evidence" value="ECO:0000314"/>
    <property type="project" value="UniProtKB"/>
</dbReference>
<dbReference type="GO" id="GO:0016607">
    <property type="term" value="C:nuclear speck"/>
    <property type="evidence" value="ECO:0000314"/>
    <property type="project" value="UniProtKB"/>
</dbReference>
<dbReference type="GO" id="GO:0005654">
    <property type="term" value="C:nucleoplasm"/>
    <property type="evidence" value="ECO:0000314"/>
    <property type="project" value="HPA"/>
</dbReference>
<dbReference type="GO" id="GO:0005634">
    <property type="term" value="C:nucleus"/>
    <property type="evidence" value="ECO:0000314"/>
    <property type="project" value="UniProtKB"/>
</dbReference>
<dbReference type="GO" id="GO:0005886">
    <property type="term" value="C:plasma membrane"/>
    <property type="evidence" value="ECO:0000314"/>
    <property type="project" value="HPA"/>
</dbReference>
<dbReference type="GO" id="GO:0032587">
    <property type="term" value="C:ruffle membrane"/>
    <property type="evidence" value="ECO:0000314"/>
    <property type="project" value="UniProtKB"/>
</dbReference>
<dbReference type="GO" id="GO:0000285">
    <property type="term" value="F:1-phosphatidylinositol-3-phosphate 5-kinase activity"/>
    <property type="evidence" value="ECO:0000304"/>
    <property type="project" value="Reactome"/>
</dbReference>
<dbReference type="GO" id="GO:0016308">
    <property type="term" value="F:1-phosphatidylinositol-4-phosphate 5-kinase activity"/>
    <property type="evidence" value="ECO:0000314"/>
    <property type="project" value="UniProtKB"/>
</dbReference>
<dbReference type="GO" id="GO:0052810">
    <property type="term" value="F:1-phosphatidylinositol-5-kinase activity"/>
    <property type="evidence" value="ECO:0000304"/>
    <property type="project" value="Reactome"/>
</dbReference>
<dbReference type="GO" id="GO:0005524">
    <property type="term" value="F:ATP binding"/>
    <property type="evidence" value="ECO:0007669"/>
    <property type="project" value="UniProtKB-KW"/>
</dbReference>
<dbReference type="GO" id="GO:0019900">
    <property type="term" value="F:kinase binding"/>
    <property type="evidence" value="ECO:0000314"/>
    <property type="project" value="UniProtKB"/>
</dbReference>
<dbReference type="GO" id="GO:0052742">
    <property type="term" value="F:phosphatidylinositol kinase activity"/>
    <property type="evidence" value="ECO:0000304"/>
    <property type="project" value="Reactome"/>
</dbReference>
<dbReference type="GO" id="GO:0030036">
    <property type="term" value="P:actin cytoskeleton organization"/>
    <property type="evidence" value="ECO:0000315"/>
    <property type="project" value="UniProtKB"/>
</dbReference>
<dbReference type="GO" id="GO:0090630">
    <property type="term" value="P:activation of GTPase activity"/>
    <property type="evidence" value="ECO:0000315"/>
    <property type="project" value="UniProtKB"/>
</dbReference>
<dbReference type="GO" id="GO:0060326">
    <property type="term" value="P:cell chemotaxis"/>
    <property type="evidence" value="ECO:0000315"/>
    <property type="project" value="UniProtKB"/>
</dbReference>
<dbReference type="GO" id="GO:0016477">
    <property type="term" value="P:cell migration"/>
    <property type="evidence" value="ECO:0000303"/>
    <property type="project" value="UniProtKB"/>
</dbReference>
<dbReference type="GO" id="GO:0010761">
    <property type="term" value="P:fibroblast migration"/>
    <property type="evidence" value="ECO:0007669"/>
    <property type="project" value="Ensembl"/>
</dbReference>
<dbReference type="GO" id="GO:0048041">
    <property type="term" value="P:focal adhesion assembly"/>
    <property type="evidence" value="ECO:0000315"/>
    <property type="project" value="UniProtKB"/>
</dbReference>
<dbReference type="GO" id="GO:0006650">
    <property type="term" value="P:glycerophospholipid metabolic process"/>
    <property type="evidence" value="ECO:0000304"/>
    <property type="project" value="ProtInc"/>
</dbReference>
<dbReference type="GO" id="GO:0030216">
    <property type="term" value="P:keratinocyte differentiation"/>
    <property type="evidence" value="ECO:0000304"/>
    <property type="project" value="UniProtKB"/>
</dbReference>
<dbReference type="GO" id="GO:0006909">
    <property type="term" value="P:phagocytosis"/>
    <property type="evidence" value="ECO:0000304"/>
    <property type="project" value="UniProtKB"/>
</dbReference>
<dbReference type="GO" id="GO:0006661">
    <property type="term" value="P:phosphatidylinositol biosynthetic process"/>
    <property type="evidence" value="ECO:0000304"/>
    <property type="project" value="Reactome"/>
</dbReference>
<dbReference type="GO" id="GO:0046854">
    <property type="term" value="P:phosphatidylinositol phosphate biosynthetic process"/>
    <property type="evidence" value="ECO:0000318"/>
    <property type="project" value="GO_Central"/>
</dbReference>
<dbReference type="GO" id="GO:0008654">
    <property type="term" value="P:phospholipid biosynthetic process"/>
    <property type="evidence" value="ECO:0000314"/>
    <property type="project" value="UniProtKB"/>
</dbReference>
<dbReference type="GO" id="GO:0072659">
    <property type="term" value="P:protein localization to plasma membrane"/>
    <property type="evidence" value="ECO:0000315"/>
    <property type="project" value="UniProtKB"/>
</dbReference>
<dbReference type="GO" id="GO:0051896">
    <property type="term" value="P:regulation of phosphatidylinositol 3-kinase/protein kinase B signal transduction"/>
    <property type="evidence" value="ECO:0000304"/>
    <property type="project" value="Reactome"/>
</dbReference>
<dbReference type="GO" id="GO:0097178">
    <property type="term" value="P:ruffle assembly"/>
    <property type="evidence" value="ECO:0000315"/>
    <property type="project" value="UniProtKB"/>
</dbReference>
<dbReference type="GO" id="GO:0007165">
    <property type="term" value="P:signal transduction"/>
    <property type="evidence" value="ECO:0000304"/>
    <property type="project" value="ProtInc"/>
</dbReference>
<dbReference type="CDD" id="cd17306">
    <property type="entry name" value="PIPKc_PIP5K1A_like"/>
    <property type="match status" value="1"/>
</dbReference>
<dbReference type="FunFam" id="3.30.800.10:FF:000001">
    <property type="entry name" value="phosphatidylinositol 4-phosphate 5-kinase type-1 gamma"/>
    <property type="match status" value="1"/>
</dbReference>
<dbReference type="Gene3D" id="3.30.810.10">
    <property type="entry name" value="2-Layer Sandwich"/>
    <property type="match status" value="1"/>
</dbReference>
<dbReference type="Gene3D" id="3.30.800.10">
    <property type="entry name" value="Phosphatidylinositol Phosphate Kinase II Beta"/>
    <property type="match status" value="1"/>
</dbReference>
<dbReference type="InterPro" id="IPR027483">
    <property type="entry name" value="PInositol-4-P-4/5-kinase_C_sf"/>
</dbReference>
<dbReference type="InterPro" id="IPR002498">
    <property type="entry name" value="PInositol-4-P-4/5-kinase_core"/>
</dbReference>
<dbReference type="InterPro" id="IPR027484">
    <property type="entry name" value="PInositol-4-P-5-kinase_N"/>
</dbReference>
<dbReference type="InterPro" id="IPR023610">
    <property type="entry name" value="PInositol-4/5-P-5/4-kinase"/>
</dbReference>
<dbReference type="PANTHER" id="PTHR23086:SF54">
    <property type="entry name" value="PHOSPHATIDYLINOSITOL 4-PHOSPHATE 5-KINASE TYPE-1 ALPHA"/>
    <property type="match status" value="1"/>
</dbReference>
<dbReference type="PANTHER" id="PTHR23086">
    <property type="entry name" value="PHOSPHATIDYLINOSITOL-4-PHOSPHATE 5-KINASE"/>
    <property type="match status" value="1"/>
</dbReference>
<dbReference type="Pfam" id="PF01504">
    <property type="entry name" value="PIP5K"/>
    <property type="match status" value="1"/>
</dbReference>
<dbReference type="SMART" id="SM00330">
    <property type="entry name" value="PIPKc"/>
    <property type="match status" value="1"/>
</dbReference>
<dbReference type="SUPFAM" id="SSF56104">
    <property type="entry name" value="SAICAR synthase-like"/>
    <property type="match status" value="1"/>
</dbReference>
<dbReference type="PROSITE" id="PS51455">
    <property type="entry name" value="PIPK"/>
    <property type="match status" value="1"/>
</dbReference>
<name>PI51A_HUMAN</name>
<evidence type="ECO:0000250" key="1">
    <source>
        <dbReference type="UniProtKB" id="P70182"/>
    </source>
</evidence>
<evidence type="ECO:0000255" key="2">
    <source>
        <dbReference type="PROSITE-ProRule" id="PRU00781"/>
    </source>
</evidence>
<evidence type="ECO:0000256" key="3">
    <source>
        <dbReference type="SAM" id="MobiDB-lite"/>
    </source>
</evidence>
<evidence type="ECO:0000269" key="4">
    <source>
    </source>
</evidence>
<evidence type="ECO:0000269" key="5">
    <source>
    </source>
</evidence>
<evidence type="ECO:0000269" key="6">
    <source>
    </source>
</evidence>
<evidence type="ECO:0000269" key="7">
    <source>
    </source>
</evidence>
<evidence type="ECO:0000269" key="8">
    <source>
    </source>
</evidence>
<evidence type="ECO:0000269" key="9">
    <source>
    </source>
</evidence>
<evidence type="ECO:0000269" key="10">
    <source>
    </source>
</evidence>
<evidence type="ECO:0000269" key="11">
    <source>
    </source>
</evidence>
<evidence type="ECO:0000303" key="12">
    <source>
    </source>
</evidence>
<evidence type="ECO:0000303" key="13">
    <source>
    </source>
</evidence>
<evidence type="ECO:0000303" key="14">
    <source>
    </source>
</evidence>
<evidence type="ECO:0000303" key="15">
    <source>
    </source>
</evidence>
<evidence type="ECO:0000305" key="16"/>
<evidence type="ECO:0000305" key="17">
    <source>
    </source>
</evidence>
<evidence type="ECO:0000305" key="18">
    <source>
    </source>
</evidence>
<evidence type="ECO:0000305" key="19">
    <source>
    </source>
</evidence>
<evidence type="ECO:0000305" key="20">
    <source>
    </source>
</evidence>
<evidence type="ECO:0000305" key="21">
    <source>
    </source>
</evidence>
<evidence type="ECO:0000312" key="22">
    <source>
        <dbReference type="HGNC" id="HGNC:8994"/>
    </source>
</evidence>
<evidence type="ECO:0007744" key="23">
    <source>
    </source>
</evidence>
<keyword id="KW-0025">Alternative splicing</keyword>
<keyword id="KW-0067">ATP-binding</keyword>
<keyword id="KW-1003">Cell membrane</keyword>
<keyword id="KW-0966">Cell projection</keyword>
<keyword id="KW-0963">Cytoplasm</keyword>
<keyword id="KW-1017">Isopeptide bond</keyword>
<keyword id="KW-0418">Kinase</keyword>
<keyword id="KW-0443">Lipid metabolism</keyword>
<keyword id="KW-0472">Membrane</keyword>
<keyword id="KW-0547">Nucleotide-binding</keyword>
<keyword id="KW-0539">Nucleus</keyword>
<keyword id="KW-0597">Phosphoprotein</keyword>
<keyword id="KW-1267">Proteomics identification</keyword>
<keyword id="KW-1185">Reference proteome</keyword>
<keyword id="KW-0808">Transferase</keyword>
<keyword id="KW-0832">Ubl conjugation</keyword>
<sequence length="562" mass="62633">MASASSGPSSSVGFSSFDPAVPSCTLSSAASGIKRPMASEVLEARQDSYISLVPYASGMPIKKIGHRSVDSSGETTYKKTTSSALKGAIQLGITHTVGSLSTKPERDVLMQDFYVVESIFFPSEGSNLTPAHHYNDFRFKTYAPVAFRYFRELFGIRPDDYLYSLCSEPLIELCSSGASGSLFYVSSDDEFIIKTVQHKEAEFLQKLLPGYYMNLNQNPRTLLPKFYGLYCVQAGGKNIRIVVMNNLLPRSVKMHIKYDLKGSTYKRRASQKEREKPLPTFKDLDFLQDIPDGLFLDADMYNALCKTLQRDCLVLQSFKIMDYSLLMSIHNIDHAQREPLSSETQYSVDTRRPAPQKALYSTAMESIQGEARRGGTMETDDHMGGIPARNSKGERLLLYIGIIDILQSYRFVKKLEHSWKALVHDGDTVSVHRPGFYAERFQRFMCNTVFKKIPLKPSPSKKFRSGSSFSRRAGSSGNSCITYQPSVSGEHKAQVTTKAEVEPGVHLGRPDVLPQTPPLEEISEGSPIPDPSFSPLVGETLQMLTTSTTLEKLEVAESEFTH</sequence>
<accession>Q99755</accession>
<accession>A8K4Q0</accession>
<accession>B4DIN0</accession>
<accession>Q99754</accession>
<accession>Q99756</accession>
<protein>
    <recommendedName>
        <fullName evidence="17">Phosphatidylinositol 4-phosphate 5-kinase type-1 alpha</fullName>
        <shortName evidence="14 15">PIP5K1-alpha</shortName>
        <shortName evidence="17">PtdIns(4)P-5-kinase 1 alpha</shortName>
        <ecNumber evidence="8 9 11">2.7.1.68</ecNumber>
    </recommendedName>
    <alternativeName>
        <fullName evidence="15">68 kDa type I phosphatidylinositol 4-phosphate 5-kinase alpha</fullName>
    </alternativeName>
    <alternativeName>
        <fullName evidence="17">Phosphatidylinositol 4-phosphate 5-kinase type I alpha</fullName>
        <shortName evidence="14 15">PIP5KIalpha</shortName>
    </alternativeName>
</protein>
<proteinExistence type="evidence at protein level"/>
<gene>
    <name evidence="22" type="primary">PIP5K1A</name>
</gene>